<gene>
    <name evidence="1" type="primary">rpl14</name>
</gene>
<organism>
    <name type="scientific">Staurastrum punctulatum</name>
    <name type="common">Green alga</name>
    <name type="synonym">Cosmoastrum punctulatum</name>
    <dbReference type="NCBI Taxonomy" id="102822"/>
    <lineage>
        <taxon>Eukaryota</taxon>
        <taxon>Viridiplantae</taxon>
        <taxon>Streptophyta</taxon>
        <taxon>Zygnematophyceae</taxon>
        <taxon>Zygnematophycidae</taxon>
        <taxon>Desmidiales</taxon>
        <taxon>Desmidiaceae</taxon>
        <taxon>Staurastrum</taxon>
    </lineage>
</organism>
<keyword id="KW-0150">Chloroplast</keyword>
<keyword id="KW-0934">Plastid</keyword>
<keyword id="KW-0687">Ribonucleoprotein</keyword>
<keyword id="KW-0689">Ribosomal protein</keyword>
<keyword id="KW-0694">RNA-binding</keyword>
<keyword id="KW-0699">rRNA-binding</keyword>
<protein>
    <recommendedName>
        <fullName evidence="1">Large ribosomal subunit protein uL14c</fullName>
    </recommendedName>
    <alternativeName>
        <fullName evidence="2">50S ribosomal protein L14, chloroplastic</fullName>
    </alternativeName>
</protein>
<accession>Q32RV2</accession>
<geneLocation type="chloroplast"/>
<evidence type="ECO:0000255" key="1">
    <source>
        <dbReference type="HAMAP-Rule" id="MF_01367"/>
    </source>
</evidence>
<evidence type="ECO:0000305" key="2"/>
<proteinExistence type="inferred from homology"/>
<name>RK14_STAPU</name>
<reference key="1">
    <citation type="journal article" date="2005" name="BMC Biol.">
        <title>The complete chloroplast DNA sequences of the charophycean green algae Staurastrum and Zygnema reveal that the chloroplast genome underwent extensive changes during the evolution of the Zygnematales.</title>
        <authorList>
            <person name="Turmel M."/>
            <person name="Otis C."/>
            <person name="Lemieux C."/>
        </authorList>
    </citation>
    <scope>NUCLEOTIDE SEQUENCE [LARGE SCALE GENOMIC DNA]</scope>
</reference>
<feature type="chain" id="PRO_0000276368" description="Large ribosomal subunit protein uL14c">
    <location>
        <begin position="1"/>
        <end position="122"/>
    </location>
</feature>
<sequence length="122" mass="13513">MIQPQSYLNVADNSGARRLMCIRVLGSSNRKYANIGDMIIAVVKEAVPNMPLKKSEVVRAVIVRTCKGIKRNNGMILRFDDNAAVVVNQEGNPRGTRVFGPVARELRDFNFTKIVSLAPEVL</sequence>
<comment type="function">
    <text evidence="1">Binds to 23S rRNA.</text>
</comment>
<comment type="subunit">
    <text evidence="1">Part of the 50S ribosomal subunit.</text>
</comment>
<comment type="subcellular location">
    <subcellularLocation>
        <location>Plastid</location>
        <location>Chloroplast</location>
    </subcellularLocation>
</comment>
<comment type="similarity">
    <text evidence="1">Belongs to the universal ribosomal protein uL14 family.</text>
</comment>
<dbReference type="EMBL" id="AY958085">
    <property type="protein sequence ID" value="AAX45737.1"/>
    <property type="molecule type" value="Genomic_DNA"/>
</dbReference>
<dbReference type="RefSeq" id="YP_636424.1">
    <property type="nucleotide sequence ID" value="NC_008116.1"/>
</dbReference>
<dbReference type="SMR" id="Q32RV2"/>
<dbReference type="GeneID" id="4108600"/>
<dbReference type="GO" id="GO:0009507">
    <property type="term" value="C:chloroplast"/>
    <property type="evidence" value="ECO:0007669"/>
    <property type="project" value="UniProtKB-SubCell"/>
</dbReference>
<dbReference type="GO" id="GO:0022625">
    <property type="term" value="C:cytosolic large ribosomal subunit"/>
    <property type="evidence" value="ECO:0007669"/>
    <property type="project" value="TreeGrafter"/>
</dbReference>
<dbReference type="GO" id="GO:0070180">
    <property type="term" value="F:large ribosomal subunit rRNA binding"/>
    <property type="evidence" value="ECO:0007669"/>
    <property type="project" value="TreeGrafter"/>
</dbReference>
<dbReference type="GO" id="GO:0003735">
    <property type="term" value="F:structural constituent of ribosome"/>
    <property type="evidence" value="ECO:0007669"/>
    <property type="project" value="InterPro"/>
</dbReference>
<dbReference type="GO" id="GO:0006412">
    <property type="term" value="P:translation"/>
    <property type="evidence" value="ECO:0007669"/>
    <property type="project" value="UniProtKB-UniRule"/>
</dbReference>
<dbReference type="CDD" id="cd00337">
    <property type="entry name" value="Ribosomal_uL14"/>
    <property type="match status" value="1"/>
</dbReference>
<dbReference type="FunFam" id="2.40.150.20:FF:000002">
    <property type="entry name" value="50S ribosomal protein L14, chloroplastic"/>
    <property type="match status" value="1"/>
</dbReference>
<dbReference type="Gene3D" id="2.40.150.20">
    <property type="entry name" value="Ribosomal protein L14"/>
    <property type="match status" value="1"/>
</dbReference>
<dbReference type="HAMAP" id="MF_01367">
    <property type="entry name" value="Ribosomal_uL14"/>
    <property type="match status" value="1"/>
</dbReference>
<dbReference type="InterPro" id="IPR000218">
    <property type="entry name" value="Ribosomal_uL14"/>
</dbReference>
<dbReference type="InterPro" id="IPR005745">
    <property type="entry name" value="Ribosomal_uL14_bac-type"/>
</dbReference>
<dbReference type="InterPro" id="IPR019972">
    <property type="entry name" value="Ribosomal_uL14_CS"/>
</dbReference>
<dbReference type="InterPro" id="IPR036853">
    <property type="entry name" value="Ribosomal_uL14_sf"/>
</dbReference>
<dbReference type="NCBIfam" id="TIGR01067">
    <property type="entry name" value="rplN_bact"/>
    <property type="match status" value="1"/>
</dbReference>
<dbReference type="PANTHER" id="PTHR11761">
    <property type="entry name" value="50S/60S RIBOSOMAL PROTEIN L14/L23"/>
    <property type="match status" value="1"/>
</dbReference>
<dbReference type="PANTHER" id="PTHR11761:SF3">
    <property type="entry name" value="LARGE RIBOSOMAL SUBUNIT PROTEIN UL14M"/>
    <property type="match status" value="1"/>
</dbReference>
<dbReference type="Pfam" id="PF00238">
    <property type="entry name" value="Ribosomal_L14"/>
    <property type="match status" value="1"/>
</dbReference>
<dbReference type="SMART" id="SM01374">
    <property type="entry name" value="Ribosomal_L14"/>
    <property type="match status" value="1"/>
</dbReference>
<dbReference type="SUPFAM" id="SSF50193">
    <property type="entry name" value="Ribosomal protein L14"/>
    <property type="match status" value="1"/>
</dbReference>
<dbReference type="PROSITE" id="PS00049">
    <property type="entry name" value="RIBOSOMAL_L14"/>
    <property type="match status" value="1"/>
</dbReference>